<gene>
    <name type="primary">ecpC</name>
    <name type="ordered locus">E2348C_0247</name>
</gene>
<sequence>MPLRRFSPGLKAQFAFGMVFLFVQPDASAADISAQQIGGVIIPQAFSQALQDGMSVPLYIHLAGSQGRQDDQRIGSAFIWLDDGQLRIRKIQLEESEDNASVSEQTRQQLMTLANAPFNEALTIPLTDNAQLDLSLRQLLLQLVVKREALGTVLRSRSEDIGQSSVNTLSSNLSYNFGVYNNQLRNGGSNTSSYLSLNNVTALREHHVVLDGSLYGIGSGQQDSELYKAMYERDFAGHRFAGGMLDTWNLQSLGPMTAISAGKIYGLSWGNQASSTIFDSSQSATPVIAFLPAAGEVHLTRDGRLLSVQNFTMGNHEVDTRGLPYGIYDVEVEVIVNGRVISKRTQRVNKLFSRGRGVGAPLAWQIWGGSFHMDRWSENGKKTRPAKESWLAGASTSGSLSTFSWAATGYGYDNQAVGETRLTLPLGVAINVNLQNMLASDSSWSNIASISATLPGGFSSLWVNQEKTRIGNQLRRSDADNRAIGGTLNLNSLWSKLGTFSISYNDDRRYNSHYYTADYYQSVYSGTFGSLGLRAGIQRYNNGDSSANTGKYIALDLSLPLGNWFSAGMTHQNGYTMANLSARKQFDEGTIRTVGANLSRAISGDTGDDKTLSGGAYAQFDARYASGTLNVNSAADGYINTNLTANGSVGWQGKNIAASGRTDGNAGVIFDTGLENDGQISAKINGRIFPLNGKRNYLPLSPYGRYEVELQNSKNSLDSYDIVSGRKSHLTLYPGNVAVIEPEVKQMVTVSGRIRAEDGTLLANARINNHIGRTRTDENGEFVMDVDKKYPTIDFRYSGNKTCEVALELNQARGAVWVGDVVCSGLSSWAAVTQTGEENES</sequence>
<name>ECPC_ECO27</name>
<reference key="1">
    <citation type="journal article" date="2009" name="J. Bacteriol.">
        <title>Complete genome sequence and comparative genome analysis of enteropathogenic Escherichia coli O127:H6 strain E2348/69.</title>
        <authorList>
            <person name="Iguchi A."/>
            <person name="Thomson N.R."/>
            <person name="Ogura Y."/>
            <person name="Saunders D."/>
            <person name="Ooka T."/>
            <person name="Henderson I.R."/>
            <person name="Harris D."/>
            <person name="Asadulghani M."/>
            <person name="Kurokawa K."/>
            <person name="Dean P."/>
            <person name="Kenny B."/>
            <person name="Quail M.A."/>
            <person name="Thurston S."/>
            <person name="Dougan G."/>
            <person name="Hayashi T."/>
            <person name="Parkhill J."/>
            <person name="Frankel G."/>
        </authorList>
    </citation>
    <scope>NUCLEOTIDE SEQUENCE [LARGE SCALE GENOMIC DNA]</scope>
    <source>
        <strain>E2348/69 / EPEC</strain>
    </source>
</reference>
<reference key="2">
    <citation type="journal article" date="2012" name="J. Bacteriol.">
        <title>Transcriptional regulation of the ecp operon by EcpR, IHF, and H-NS in attaching and effacing Escherichia coli.</title>
        <authorList>
            <person name="Martinez-Santos V.I."/>
            <person name="Medrano-Lopez A."/>
            <person name="Saldana Z."/>
            <person name="Giron J.A."/>
            <person name="Puente J.L."/>
        </authorList>
    </citation>
    <scope>INDUCTION</scope>
    <source>
        <strain>E2348/69 / EPEC</strain>
    </source>
</reference>
<dbReference type="EMBL" id="FM180568">
    <property type="protein sequence ID" value="CAS07795.1"/>
    <property type="molecule type" value="Genomic_DNA"/>
</dbReference>
<dbReference type="RefSeq" id="WP_001131110.1">
    <property type="nucleotide sequence ID" value="NC_011601.1"/>
</dbReference>
<dbReference type="KEGG" id="ecg:E2348C_0247"/>
<dbReference type="HOGENOM" id="CLU_017537_0_0_6"/>
<dbReference type="Proteomes" id="UP000008205">
    <property type="component" value="Chromosome"/>
</dbReference>
<dbReference type="InterPro" id="IPR008969">
    <property type="entry name" value="CarboxyPept-like_regulatory"/>
</dbReference>
<dbReference type="InterPro" id="IPR031917">
    <property type="entry name" value="Pilus_assem_C"/>
</dbReference>
<dbReference type="InterPro" id="IPR032636">
    <property type="entry name" value="Pilus_assem_E-set-like_dom"/>
</dbReference>
<dbReference type="Pfam" id="PF15976">
    <property type="entry name" value="CooC_C"/>
    <property type="match status" value="1"/>
</dbReference>
<dbReference type="Pfam" id="PF16967">
    <property type="entry name" value="TcfC"/>
    <property type="match status" value="1"/>
</dbReference>
<dbReference type="SUPFAM" id="SSF49464">
    <property type="entry name" value="Carboxypeptidase regulatory domain-like"/>
    <property type="match status" value="1"/>
</dbReference>
<keyword id="KW-1029">Fimbrium biogenesis</keyword>
<keyword id="KW-1185">Reference proteome</keyword>
<keyword id="KW-0732">Signal</keyword>
<keyword id="KW-0813">Transport</keyword>
<evidence type="ECO:0000250" key="1"/>
<evidence type="ECO:0000255" key="2"/>
<evidence type="ECO:0000269" key="3">
    <source>
    </source>
</evidence>
<evidence type="ECO:0000305" key="4"/>
<protein>
    <recommendedName>
        <fullName>Probable outer membrane usher protein EcpC</fullName>
    </recommendedName>
</protein>
<proteinExistence type="evidence at transcript level"/>
<comment type="function">
    <text evidence="1">Part of the ecpRABCDE operon, which encodes the E.coli common pilus (ECP). ECP is found in both commensal and pathogenic strains and plays a dual role in early-stage biofilm development and host cell recognition (By similarity).</text>
</comment>
<comment type="induction">
    <text evidence="3">Negatively regulated by H-NS. Positively regulated by IHF and EcpR.</text>
</comment>
<comment type="similarity">
    <text evidence="4">Belongs to the EcpC/MatD family.</text>
</comment>
<organism>
    <name type="scientific">Escherichia coli O127:H6 (strain E2348/69 / EPEC)</name>
    <dbReference type="NCBI Taxonomy" id="574521"/>
    <lineage>
        <taxon>Bacteria</taxon>
        <taxon>Pseudomonadati</taxon>
        <taxon>Pseudomonadota</taxon>
        <taxon>Gammaproteobacteria</taxon>
        <taxon>Enterobacterales</taxon>
        <taxon>Enterobacteriaceae</taxon>
        <taxon>Escherichia</taxon>
    </lineage>
</organism>
<accession>B7UJD9</accession>
<feature type="signal peptide" evidence="2">
    <location>
        <begin position="1"/>
        <end position="29"/>
    </location>
</feature>
<feature type="chain" id="PRO_0000429530" description="Probable outer membrane usher protein EcpC">
    <location>
        <begin position="30"/>
        <end position="841"/>
    </location>
</feature>